<comment type="function">
    <molecule>Pre-protein VI</molecule>
    <text evidence="1">During virus assembly, promotes hexon trimers nuclear import through nuclear pore complexes via an importin alpha/beta-dependent mechanism. By analogy to herpesviruses capsid assembly, might act as a chaperone to promote the formation of the icosahedral capsid.</text>
</comment>
<comment type="function">
    <molecule>Endosome lysis protein</molecule>
    <text evidence="1">Structural component of the virion that provides increased stability to the particle shell through its interaction with the core-capsid bridging protein and the hexon-linking protein VIII. Fibers shedding during virus entry into host cell allows the endosome lysis protein to be exposed as a membrane-lytic peptide. Exhibits pH-independent membrane fragmentation activity and probably mediates viral rapid escape from host endosome via organellar membrane lysis. It is not clear if it then remains partially associated with the capsid and involved in the intracellular microtubule-dependent transport of capsid to the nucleus, or if it is lost during endosomal penetration.</text>
</comment>
<comment type="function">
    <molecule>Protease cofactor</molecule>
    <text evidence="1">Cofactor that activates the viral protease. Binds to viral protease in a 1:1 ratio.</text>
</comment>
<comment type="subunit">
    <molecule>Pre-protein VI</molecule>
    <text evidence="1">Interacts with hexon protein; this interaction allows nuclear import of hexon trimers and possibly pre-capsid assembly. Interacts (via C-terminal NLS) with importin alpha/beta.</text>
</comment>
<comment type="subunit">
    <molecule>Endosome lysis protein</molecule>
    <text evidence="1">Interacts (via PPxY motif) with host NEDD4 ubiquitine ligase; this interaction might play a role in virus intracellular transport during entry. Part of a complex composed of the core-capsid bridging protein, the endosome lysis protein VI and the hexon-linking protein VIII; these interactions bridge the virus core to the capsid. Interacts with peripentonal hexons; this interaction stabilizes the capsid by gluing two peripentonal hexons together and joining them with an adjacent group-of-nine hexon.</text>
</comment>
<comment type="subunit">
    <molecule>Protease cofactor</molecule>
    <text evidence="1">Heterodimer with the viral protease; disulfide-linked. Interacts with the viral protease.</text>
</comment>
<comment type="subcellular location">
    <molecule>Pre-protein VI</molecule>
    <subcellularLocation>
        <location evidence="1">Host nucleus</location>
    </subcellularLocation>
    <subcellularLocation>
        <location evidence="1">Host cytoplasm</location>
    </subcellularLocation>
    <text evidence="1">Shuttles between host cytoplasm and nucleus.</text>
</comment>
<comment type="subcellular location">
    <molecule>Endosome lysis protein</molecule>
    <subcellularLocation>
        <location evidence="1">Virion</location>
    </subcellularLocation>
    <text evidence="1">Associates with the base of each peripentonal hexon on the capsid interior. Present in around 360 copies per virion.</text>
</comment>
<comment type="induction">
    <text evidence="1">Expressed in the late phase of the viral replicative cycle.</text>
</comment>
<comment type="domain">
    <text evidence="1">N-terminal amphipathic alpha-helix domain is essential for the membrane lytic activity.</text>
</comment>
<comment type="domain">
    <text evidence="1">Late-budding domains (L domains) are short sequence motifs essential for viral particle release. They can occur individually or in close proximity within structural proteins. They interacts with sorting cellular proteins of the multivesicular body (MVB) pathway. Most of these proteins are class E vacuolar protein sorting factors belonging to ESCRT-I, ESCRT-II or ESCRT-III complexes. Minor capsid protein 6 contains one L domain: a PPXY motif which binds to the WW domains of HECT (homologous to E6-AP C-terminus) E3 ubiquitin ligases, like NEDD4. In adenoviruses, this motif seems to play a role in microtubule-dependent intracellular trafficking toward the nucleus during virus entry into host cell and in suppression of DAXX-mediated repression of the immediate early E1A promoter.</text>
</comment>
<comment type="PTM">
    <text evidence="1">Ubiquitinated by Nedd4 following partial capsid disassembly; which might play a role in intracellular virus movement during entry.</text>
</comment>
<comment type="PTM">
    <molecule>Protease cofactor</molecule>
    <text evidence="1">Contains the major nuclear import and export signals. Proteolytically removed during virion maturation. The processing of the C-terminus turns the precursor into a mature viral structural protein and abrogates its ability to promote hexon import and act as a potential chaperone protein.</text>
</comment>
<comment type="miscellaneous">
    <text evidence="1">All late proteins expressed from the major late promoter are produced by alternative splicing and alternative polyadenylation of the same gene giving rise to non-overlapping ORFs. A leader sequence is present in the N-terminus of all these mRNAs and is recognized by the viral shutoff protein to provide expression although conventional translation via ribosome scanning from the cap has been shut off in the host cell.</text>
</comment>
<comment type="similarity">
    <text evidence="1">Belongs to the adenoviridae protein VI family.</text>
</comment>
<proteinExistence type="inferred from homology"/>
<dbReference type="EMBL" id="U46933">
    <property type="protein sequence ID" value="AAC54911.1"/>
    <property type="molecule type" value="Genomic_DNA"/>
</dbReference>
<dbReference type="RefSeq" id="NP_043885.1">
    <property type="nucleotide sequence ID" value="NC_001720.1"/>
</dbReference>
<dbReference type="GeneID" id="1476562"/>
<dbReference type="Proteomes" id="UP000001594">
    <property type="component" value="Segment"/>
</dbReference>
<dbReference type="GO" id="GO:0043657">
    <property type="term" value="C:host cell"/>
    <property type="evidence" value="ECO:0007669"/>
    <property type="project" value="GOC"/>
</dbReference>
<dbReference type="GO" id="GO:0030430">
    <property type="term" value="C:host cell cytoplasm"/>
    <property type="evidence" value="ECO:0007669"/>
    <property type="project" value="UniProtKB-SubCell"/>
</dbReference>
<dbReference type="GO" id="GO:0042025">
    <property type="term" value="C:host cell nucleus"/>
    <property type="evidence" value="ECO:0007669"/>
    <property type="project" value="UniProtKB-SubCell"/>
</dbReference>
<dbReference type="GO" id="GO:0019028">
    <property type="term" value="C:viral capsid"/>
    <property type="evidence" value="ECO:0007669"/>
    <property type="project" value="UniProtKB-UniRule"/>
</dbReference>
<dbReference type="GO" id="GO:0046729">
    <property type="term" value="C:viral procapsid"/>
    <property type="evidence" value="ECO:0007669"/>
    <property type="project" value="UniProtKB-UniRule"/>
</dbReference>
<dbReference type="GO" id="GO:0039664">
    <property type="term" value="P:lysis of host organelle involved in viral entry into host cell"/>
    <property type="evidence" value="ECO:0007669"/>
    <property type="project" value="UniProtKB-UniRule"/>
</dbReference>
<dbReference type="GO" id="GO:0075521">
    <property type="term" value="P:microtubule-dependent intracellular transport of viral material towards nucleus"/>
    <property type="evidence" value="ECO:0007669"/>
    <property type="project" value="UniProtKB-UniRule"/>
</dbReference>
<dbReference type="GO" id="GO:0019076">
    <property type="term" value="P:viral release from host cell"/>
    <property type="evidence" value="ECO:0007669"/>
    <property type="project" value="UniProtKB-UniRule"/>
</dbReference>
<dbReference type="HAMAP" id="MF_04048">
    <property type="entry name" value="ADV_CAP6"/>
    <property type="match status" value="1"/>
</dbReference>
<dbReference type="InterPro" id="IPR004243">
    <property type="entry name" value="McpVI"/>
</dbReference>
<dbReference type="Pfam" id="PF02993">
    <property type="entry name" value="MCPVI"/>
    <property type="match status" value="1"/>
</dbReference>
<gene>
    <name evidence="1" type="primary">L3</name>
</gene>
<organism>
    <name type="scientific">Fowl adenovirus A serotype 1 (strain CELO / Phelps)</name>
    <name type="common">FAdV-1</name>
    <name type="synonym">Avian adenovirus gal1 (strain Phelps)</name>
    <dbReference type="NCBI Taxonomy" id="10553"/>
    <lineage>
        <taxon>Viruses</taxon>
        <taxon>Varidnaviria</taxon>
        <taxon>Bamfordvirae</taxon>
        <taxon>Preplasmiviricota</taxon>
        <taxon>Tectiliviricetes</taxon>
        <taxon>Rowavirales</taxon>
        <taxon>Adenoviridae</taxon>
        <taxon>Aviadenovirus</taxon>
        <taxon>Fowl aviadenovirus A</taxon>
    </lineage>
</organism>
<sequence length="223" mass="23891">MDYAALSPHLGGWALRDHHIGDSSLRGGAINWGNLGSRITSALNSTGRWLYNTGNRFVHSNTFNQIKQGIQDSGVIRNVANLAGETLGALTDIGRLKLQQDLEKLRRKALGEEGPATQAELQALIQALQAQVAAGEPPAAPAAPAPAPPLVPTTRPIPEMVTEVKPPVTSSAPAVPVDVPTTLEMRPPPPKRRRKRARPGQWRARLDSLSGTGVATATRRMCY</sequence>
<accession>Q64757</accession>
<keyword id="KW-0167">Capsid protein</keyword>
<keyword id="KW-1176">Cytoplasmic inwards viral transport</keyword>
<keyword id="KW-1015">Disulfide bond</keyword>
<keyword id="KW-1035">Host cytoplasm</keyword>
<keyword id="KW-1048">Host nucleus</keyword>
<keyword id="KW-0945">Host-virus interaction</keyword>
<keyword id="KW-0426">Late protein</keyword>
<keyword id="KW-1177">Microtubular inwards viral transport</keyword>
<keyword id="KW-0597">Phosphoprotein</keyword>
<keyword id="KW-1185">Reference proteome</keyword>
<keyword id="KW-0832">Ubl conjugation</keyword>
<keyword id="KW-0118">Viral capsid assembly</keyword>
<keyword id="KW-1162">Viral penetration into host cytoplasm</keyword>
<keyword id="KW-1174">Viral penetration via lysis of host organellar membrane</keyword>
<keyword id="KW-1188">Viral release from host cell</keyword>
<keyword id="KW-0946">Virion</keyword>
<keyword id="KW-1160">Virus entry into host cell</keyword>
<evidence type="ECO:0000255" key="1">
    <source>
        <dbReference type="HAMAP-Rule" id="MF_04048"/>
    </source>
</evidence>
<evidence type="ECO:0000256" key="2">
    <source>
        <dbReference type="SAM" id="MobiDB-lite"/>
    </source>
</evidence>
<protein>
    <recommendedName>
        <fullName evidence="1">Pre-protein VI</fullName>
        <shortName evidence="1">pVI</shortName>
    </recommendedName>
    <component>
        <recommendedName>
            <fullName evidence="1">Endosome lysis protein</fullName>
        </recommendedName>
    </component>
    <component>
        <recommendedName>
            <fullName evidence="1">Protease cofactor</fullName>
        </recommendedName>
        <alternativeName>
            <fullName evidence="1">pVI-C</fullName>
        </alternativeName>
    </component>
</protein>
<feature type="chain" id="PRO_0000421432" description="Pre-protein VI" evidence="1">
    <location>
        <begin position="1"/>
        <end position="223"/>
    </location>
</feature>
<feature type="propeptide" id="PRO_0000036566" evidence="1">
    <location>
        <begin position="1"/>
        <end position="28"/>
    </location>
</feature>
<feature type="chain" id="PRO_0000036567" description="Endosome lysis protein" evidence="1">
    <location>
        <begin position="29"/>
        <end position="212"/>
    </location>
</feature>
<feature type="peptide" id="PRO_0000036568" description="Protease cofactor">
    <location>
        <begin position="213"/>
        <end position="223"/>
    </location>
</feature>
<feature type="chain" id="PRO_0000439555" description="Protease cofactor" evidence="1">
    <location>
        <begin position="213"/>
        <end position="223"/>
    </location>
</feature>
<feature type="region of interest" description="Amphipathic alpha-helix essential for membrane lytic activity" evidence="1">
    <location>
        <begin position="29"/>
        <end position="53"/>
    </location>
</feature>
<feature type="region of interest" description="Involved in endosomal membrane lysis" evidence="1">
    <location>
        <begin position="31"/>
        <end position="52"/>
    </location>
</feature>
<feature type="region of interest" description="Interaction with hexon protein" evidence="1">
    <location>
        <begin position="47"/>
        <end position="73"/>
    </location>
</feature>
<feature type="region of interest" description="Disordered" evidence="2">
    <location>
        <begin position="136"/>
        <end position="155"/>
    </location>
</feature>
<feature type="region of interest" description="Disordered" evidence="2">
    <location>
        <begin position="166"/>
        <end position="203"/>
    </location>
</feature>
<feature type="region of interest" description="Interaction with hexon protein" evidence="1">
    <location>
        <begin position="206"/>
        <end position="212"/>
    </location>
</feature>
<feature type="region of interest" description="Binds to importin alpha/beta, involved in hexon nuclear import" evidence="1">
    <location>
        <begin position="213"/>
        <end position="223"/>
    </location>
</feature>
<feature type="short sequence motif" description="Nuclear export signal" evidence="1">
    <location>
        <begin position="66"/>
        <end position="75"/>
    </location>
</feature>
<feature type="short sequence motif" description="Nuclear export signal" evidence="1">
    <location>
        <begin position="204"/>
        <end position="215"/>
    </location>
</feature>
<feature type="compositionally biased region" description="Pro residues" evidence="2">
    <location>
        <begin position="138"/>
        <end position="151"/>
    </location>
</feature>
<feature type="compositionally biased region" description="Low complexity" evidence="2">
    <location>
        <begin position="166"/>
        <end position="182"/>
    </location>
</feature>
<feature type="compositionally biased region" description="Basic residues" evidence="2">
    <location>
        <begin position="189"/>
        <end position="198"/>
    </location>
</feature>
<feature type="site" description="Cleavage; by viral protease" evidence="1">
    <location>
        <begin position="28"/>
        <end position="29"/>
    </location>
</feature>
<feature type="site" description="Cleavage; by viral protease" evidence="1">
    <location>
        <begin position="212"/>
        <end position="213"/>
    </location>
</feature>
<feature type="disulfide bond" description="Interchain (with Adenovirus protease)" evidence="1">
    <location>
        <position position="222"/>
    </location>
</feature>
<reference key="1">
    <citation type="journal article" date="1996" name="J. Virol.">
        <title>The complete DNA sequence and genomic organization of the avian adenovirus CELO.</title>
        <authorList>
            <person name="Chiocca S."/>
            <person name="Kurzbauer R."/>
            <person name="Schaffner G."/>
            <person name="Baker A."/>
            <person name="Mautner V."/>
            <person name="Cotten M."/>
        </authorList>
    </citation>
    <scope>NUCLEOTIDE SEQUENCE [LARGE SCALE GENOMIC DNA]</scope>
</reference>
<name>CAP6_ADEG1</name>
<organismHost>
    <name type="scientific">Galliformes</name>
    <dbReference type="NCBI Taxonomy" id="8976"/>
</organismHost>